<organism>
    <name type="scientific">Ovis aries</name>
    <name type="common">Sheep</name>
    <dbReference type="NCBI Taxonomy" id="9940"/>
    <lineage>
        <taxon>Eukaryota</taxon>
        <taxon>Metazoa</taxon>
        <taxon>Chordata</taxon>
        <taxon>Craniata</taxon>
        <taxon>Vertebrata</taxon>
        <taxon>Euteleostomi</taxon>
        <taxon>Mammalia</taxon>
        <taxon>Eutheria</taxon>
        <taxon>Laurasiatheria</taxon>
        <taxon>Artiodactyla</taxon>
        <taxon>Ruminantia</taxon>
        <taxon>Pecora</taxon>
        <taxon>Bovidae</taxon>
        <taxon>Caprinae</taxon>
        <taxon>Ovis</taxon>
    </lineage>
</organism>
<gene>
    <name type="primary">HSD11B1</name>
</gene>
<evidence type="ECO:0000250" key="1"/>
<evidence type="ECO:0000250" key="2">
    <source>
        <dbReference type="UniProtKB" id="P28845"/>
    </source>
</evidence>
<evidence type="ECO:0000250" key="3">
    <source>
        <dbReference type="UniProtKB" id="P50172"/>
    </source>
</evidence>
<evidence type="ECO:0000255" key="4"/>
<evidence type="ECO:0000255" key="5">
    <source>
        <dbReference type="PROSITE-ProRule" id="PRU10001"/>
    </source>
</evidence>
<evidence type="ECO:0000269" key="6">
    <source>
    </source>
</evidence>
<evidence type="ECO:0000303" key="7">
    <source>
    </source>
</evidence>
<evidence type="ECO:0000305" key="8"/>
<protein>
    <recommendedName>
        <fullName evidence="7">11-beta-hydroxysteroid dehydrogenase 1</fullName>
        <shortName>11-DH</shortName>
        <shortName evidence="7">11-beta-HSD1</shortName>
        <ecNumber>1.1.1.146</ecNumber>
    </recommendedName>
    <alternativeName>
        <fullName>7-oxosteroid reductase</fullName>
        <ecNumber evidence="2">1.1.1.201</ecNumber>
    </alternativeName>
    <alternativeName>
        <fullName>Corticosteroid 11-beta-dehydrogenase isozyme 1</fullName>
    </alternativeName>
</protein>
<reference key="1">
    <citation type="journal article" date="1992" name="Endocrinology">
        <title>Cloning of an ovine 11 beta-hydroxysteroid dehydrogenase complementary deoxyribonucleic acid: tissue and temporal distribution of its messenger ribonucleic acid during fetal and neonatal development.</title>
        <authorList>
            <person name="Yang K."/>
            <person name="Smith C.L."/>
            <person name="Dales D."/>
            <person name="Hammond G.L."/>
            <person name="Challis J.R."/>
        </authorList>
    </citation>
    <scope>NUCLEOTIDE SEQUENCE [MRNA]</scope>
    <scope>TISSUE SPECIFICITY</scope>
    <scope>DEVELOPMENTAL STAGE</scope>
    <source>
        <tissue>Liver</tissue>
    </source>
</reference>
<comment type="function">
    <text evidence="2 3">Controls the reversible conversion of biologically active glucocorticoids such as cortisone to cortisol, and 11-dehydrocorticosterone to corticosterone in the presence of NADP(H) (By similarity). Participates in the corticosteroid receptor-mediated anti-inflammatory response, as well as metabolic and homeostatic processes (By similarity). Plays a role in the secretion of aqueous humor in the eye, maintaining a normotensive, intraocular environment (By similarity). Bidirectional in vitro, predominantly functions as a reductase in vivo, thereby increasing the concentration of active glucocorticoids (By similarity). It has broad substrate specificity, besides glucocorticoids, it accepts other steroid and sterol substrates. Interconverts 7-oxo- and 7-hydroxy-neurosteroids such as 7-oxopregnenolone and 7beta-hydroxypregnenolone, 7-oxodehydroepiandrosterone (3beta-hydroxy-5-androstene-7,17-dione) and 7beta-hydroxydehydroepiandrosterone (3beta,7beta-dihydroxyandrost-5-en-17-one), among others (By similarity). Catalyzes the stereo-specific conversion of the major dietary oxysterol, 7-ketocholesterol (7-oxocholesterol), into the more polar 7-beta-hydroxycholesterol metabolite (By similarity). 7-oxocholesterol is one of the most important oxysterols, it participates in several events such as induction of apoptosis, accumulation in atherosclerotic lesions, lipid peroxidation, and induction of foam cell formation (By similarity). Mediates the 7-oxo reduction of 7-oxolithocholate mainly to chenodeoxycholate, and to a lesser extent to ursodeoxycholate, both in its free form and when conjugated to glycine or taurine, providing a link between glucocorticoid activation and bile acid metabolism (By similarity). Catalyzes the synthesis of 7-beta-25-dihydroxycholesterol from 7-oxo-25-hydroxycholesterol in vitro, which acts as a ligand for the G-protein-coupled receptor (GPCR) Epstein-Barr virus-induced gene 2 (EBI2) and may thereby regulate immune cell migration (By similarity).</text>
</comment>
<comment type="catalytic activity">
    <reaction evidence="2">
        <text>an 11beta-hydroxysteroid + NADP(+) = an 11-oxosteroid + NADPH + H(+)</text>
        <dbReference type="Rhea" id="RHEA:11388"/>
        <dbReference type="ChEBI" id="CHEBI:15378"/>
        <dbReference type="ChEBI" id="CHEBI:35346"/>
        <dbReference type="ChEBI" id="CHEBI:47787"/>
        <dbReference type="ChEBI" id="CHEBI:57783"/>
        <dbReference type="ChEBI" id="CHEBI:58349"/>
        <dbReference type="EC" id="1.1.1.146"/>
    </reaction>
    <physiologicalReaction direction="left-to-right" evidence="2">
        <dbReference type="Rhea" id="RHEA:11389"/>
    </physiologicalReaction>
    <physiologicalReaction direction="right-to-left" evidence="2">
        <dbReference type="Rhea" id="RHEA:11390"/>
    </physiologicalReaction>
</comment>
<comment type="catalytic activity">
    <reaction evidence="2">
        <text>corticosterone + NADP(+) = 11-dehydrocorticosterone + NADPH + H(+)</text>
        <dbReference type="Rhea" id="RHEA:42200"/>
        <dbReference type="ChEBI" id="CHEBI:15378"/>
        <dbReference type="ChEBI" id="CHEBI:16827"/>
        <dbReference type="ChEBI" id="CHEBI:57783"/>
        <dbReference type="ChEBI" id="CHEBI:58349"/>
        <dbReference type="ChEBI" id="CHEBI:78600"/>
    </reaction>
    <physiologicalReaction direction="left-to-right" evidence="2">
        <dbReference type="Rhea" id="RHEA:42201"/>
    </physiologicalReaction>
    <physiologicalReaction direction="right-to-left" evidence="2">
        <dbReference type="Rhea" id="RHEA:42202"/>
    </physiologicalReaction>
</comment>
<comment type="catalytic activity">
    <reaction evidence="2">
        <text>cortisone + NADPH + H(+) = cortisol + NADP(+)</text>
        <dbReference type="Rhea" id="RHEA:68616"/>
        <dbReference type="ChEBI" id="CHEBI:15378"/>
        <dbReference type="ChEBI" id="CHEBI:16962"/>
        <dbReference type="ChEBI" id="CHEBI:17650"/>
        <dbReference type="ChEBI" id="CHEBI:57783"/>
        <dbReference type="ChEBI" id="CHEBI:58349"/>
    </reaction>
    <physiologicalReaction direction="left-to-right" evidence="2">
        <dbReference type="Rhea" id="RHEA:68617"/>
    </physiologicalReaction>
    <physiologicalReaction direction="right-to-left" evidence="2">
        <dbReference type="Rhea" id="RHEA:68618"/>
    </physiologicalReaction>
</comment>
<comment type="catalytic activity">
    <reaction evidence="2">
        <text>a 7beta-hydroxysteroid + NADP(+) = a 7-oxosteroid + NADPH + H(+)</text>
        <dbReference type="Rhea" id="RHEA:20233"/>
        <dbReference type="ChEBI" id="CHEBI:15378"/>
        <dbReference type="ChEBI" id="CHEBI:35349"/>
        <dbReference type="ChEBI" id="CHEBI:47789"/>
        <dbReference type="ChEBI" id="CHEBI:57783"/>
        <dbReference type="ChEBI" id="CHEBI:58349"/>
        <dbReference type="EC" id="1.1.1.201"/>
    </reaction>
    <physiologicalReaction direction="right-to-left" evidence="2">
        <dbReference type="Rhea" id="RHEA:20235"/>
    </physiologicalReaction>
</comment>
<comment type="catalytic activity">
    <reaction evidence="2">
        <text>7-oxocholesterol + NADPH + H(+) = 7beta-hydroxycholesterol + NADP(+)</text>
        <dbReference type="Rhea" id="RHEA:68656"/>
        <dbReference type="ChEBI" id="CHEBI:15378"/>
        <dbReference type="ChEBI" id="CHEBI:42989"/>
        <dbReference type="ChEBI" id="CHEBI:57783"/>
        <dbReference type="ChEBI" id="CHEBI:58349"/>
        <dbReference type="ChEBI" id="CHEBI:64294"/>
    </reaction>
    <physiologicalReaction direction="left-to-right" evidence="2">
        <dbReference type="Rhea" id="RHEA:68657"/>
    </physiologicalReaction>
</comment>
<comment type="catalytic activity">
    <reaction evidence="2">
        <text>chenodeoxycholate + NADP(+) = 7-oxolithocholate + NADPH + H(+)</text>
        <dbReference type="Rhea" id="RHEA:53820"/>
        <dbReference type="ChEBI" id="CHEBI:15378"/>
        <dbReference type="ChEBI" id="CHEBI:36234"/>
        <dbReference type="ChEBI" id="CHEBI:57783"/>
        <dbReference type="ChEBI" id="CHEBI:58349"/>
        <dbReference type="ChEBI" id="CHEBI:78605"/>
    </reaction>
    <physiologicalReaction direction="right-to-left" evidence="2">
        <dbReference type="Rhea" id="RHEA:53822"/>
    </physiologicalReaction>
</comment>
<comment type="catalytic activity">
    <reaction evidence="2">
        <text>7-oxolithocholate + NADPH + H(+) = ursodeoxycholate + NADP(+)</text>
        <dbReference type="Rhea" id="RHEA:47540"/>
        <dbReference type="ChEBI" id="CHEBI:15378"/>
        <dbReference type="ChEBI" id="CHEBI:57783"/>
        <dbReference type="ChEBI" id="CHEBI:58349"/>
        <dbReference type="ChEBI" id="CHEBI:78604"/>
        <dbReference type="ChEBI" id="CHEBI:78605"/>
    </reaction>
    <physiologicalReaction direction="left-to-right" evidence="2">
        <dbReference type="Rhea" id="RHEA:47541"/>
    </physiologicalReaction>
</comment>
<comment type="catalytic activity">
    <reaction evidence="2">
        <text>glycochenodeoxycholate + NADP(+) = 7-oxoglycolithocholate + NADPH + H(+)</text>
        <dbReference type="Rhea" id="RHEA:65056"/>
        <dbReference type="ChEBI" id="CHEBI:15378"/>
        <dbReference type="ChEBI" id="CHEBI:36252"/>
        <dbReference type="ChEBI" id="CHEBI:57783"/>
        <dbReference type="ChEBI" id="CHEBI:58349"/>
        <dbReference type="ChEBI" id="CHEBI:137818"/>
    </reaction>
    <physiologicalReaction direction="right-to-left" evidence="2">
        <dbReference type="Rhea" id="RHEA:65058"/>
    </physiologicalReaction>
</comment>
<comment type="catalytic activity">
    <reaction evidence="2">
        <text>taurochenodeoxycholate + NADP(+) = 7-oxotaurolithocholate + NADPH + H(+)</text>
        <dbReference type="Rhea" id="RHEA:65060"/>
        <dbReference type="ChEBI" id="CHEBI:9407"/>
        <dbReference type="ChEBI" id="CHEBI:15378"/>
        <dbReference type="ChEBI" id="CHEBI:57783"/>
        <dbReference type="ChEBI" id="CHEBI:58349"/>
        <dbReference type="ChEBI" id="CHEBI:137724"/>
    </reaction>
    <physiologicalReaction direction="right-to-left" evidence="2">
        <dbReference type="Rhea" id="RHEA:65062"/>
    </physiologicalReaction>
</comment>
<comment type="catalytic activity">
    <reaction evidence="2">
        <text>tauroursodeoxycholate + NADP(+) = 7-oxotaurolithocholate + NADPH + H(+)</text>
        <dbReference type="Rhea" id="RHEA:68980"/>
        <dbReference type="ChEBI" id="CHEBI:15378"/>
        <dbReference type="ChEBI" id="CHEBI:57783"/>
        <dbReference type="ChEBI" id="CHEBI:58349"/>
        <dbReference type="ChEBI" id="CHEBI:132028"/>
        <dbReference type="ChEBI" id="CHEBI:137724"/>
    </reaction>
    <physiologicalReaction direction="right-to-left" evidence="2">
        <dbReference type="Rhea" id="RHEA:68982"/>
    </physiologicalReaction>
</comment>
<comment type="catalytic activity">
    <reaction evidence="2">
        <text>glycoursodeoxycholate + NADP(+) = 7-oxoglycolithocholate + NADPH + H(+)</text>
        <dbReference type="Rhea" id="RHEA:68976"/>
        <dbReference type="ChEBI" id="CHEBI:15378"/>
        <dbReference type="ChEBI" id="CHEBI:57783"/>
        <dbReference type="ChEBI" id="CHEBI:58349"/>
        <dbReference type="ChEBI" id="CHEBI:132030"/>
        <dbReference type="ChEBI" id="CHEBI:137818"/>
    </reaction>
    <physiologicalReaction direction="right-to-left" evidence="2">
        <dbReference type="Rhea" id="RHEA:68978"/>
    </physiologicalReaction>
</comment>
<comment type="catalytic activity">
    <reaction evidence="2">
        <text>7-oxopregnenolone + NADPH + H(+) = 7beta-hydroxypregnenolone + NADP(+)</text>
        <dbReference type="Rhea" id="RHEA:69436"/>
        <dbReference type="ChEBI" id="CHEBI:15378"/>
        <dbReference type="ChEBI" id="CHEBI:57783"/>
        <dbReference type="ChEBI" id="CHEBI:58349"/>
        <dbReference type="ChEBI" id="CHEBI:183806"/>
        <dbReference type="ChEBI" id="CHEBI:183807"/>
    </reaction>
    <physiologicalReaction direction="left-to-right" evidence="2">
        <dbReference type="Rhea" id="RHEA:69437"/>
    </physiologicalReaction>
</comment>
<comment type="catalytic activity">
    <reaction evidence="2">
        <text>3beta,7alpha-dihydroxyandrost-5-en-17-one + NADP(+) = 3beta-hydroxy-5-androstene-7,17-dione + NADPH + H(+)</text>
        <dbReference type="Rhea" id="RHEA:69440"/>
        <dbReference type="ChEBI" id="CHEBI:15378"/>
        <dbReference type="ChEBI" id="CHEBI:57783"/>
        <dbReference type="ChEBI" id="CHEBI:58349"/>
        <dbReference type="ChEBI" id="CHEBI:81471"/>
        <dbReference type="ChEBI" id="CHEBI:183808"/>
    </reaction>
    <physiologicalReaction direction="left-to-right" evidence="2">
        <dbReference type="Rhea" id="RHEA:69441"/>
    </physiologicalReaction>
</comment>
<comment type="catalytic activity">
    <reaction evidence="2">
        <text>3beta-hydroxy-5-androstene-7,17-dione + NADPH + H(+) = 3beta,7beta-dihydroxyandrost-5-en-17-one + NADP(+)</text>
        <dbReference type="Rhea" id="RHEA:69452"/>
        <dbReference type="ChEBI" id="CHEBI:15378"/>
        <dbReference type="ChEBI" id="CHEBI:57783"/>
        <dbReference type="ChEBI" id="CHEBI:58349"/>
        <dbReference type="ChEBI" id="CHEBI:183368"/>
        <dbReference type="ChEBI" id="CHEBI:183808"/>
    </reaction>
    <physiologicalReaction direction="left-to-right" evidence="2">
        <dbReference type="Rhea" id="RHEA:69453"/>
    </physiologicalReaction>
</comment>
<comment type="catalytic activity">
    <reaction evidence="2">
        <text>3beta-hydroxy-5alpha-androstane-7,17-dione + NADPH + H(+) = 3beta,7beta-dihydroxy-5alpha-androstan-17-one + NADP(+)</text>
        <dbReference type="Rhea" id="RHEA:69456"/>
        <dbReference type="ChEBI" id="CHEBI:15378"/>
        <dbReference type="ChEBI" id="CHEBI:57783"/>
        <dbReference type="ChEBI" id="CHEBI:58349"/>
        <dbReference type="ChEBI" id="CHEBI:79834"/>
        <dbReference type="ChEBI" id="CHEBI:183809"/>
    </reaction>
    <physiologicalReaction direction="left-to-right" evidence="2">
        <dbReference type="Rhea" id="RHEA:69457"/>
    </physiologicalReaction>
</comment>
<comment type="subunit">
    <text evidence="2">Homodimer.</text>
</comment>
<comment type="subcellular location">
    <subcellularLocation>
        <location>Endoplasmic reticulum membrane</location>
        <topology>Single-pass type II membrane protein</topology>
    </subcellularLocation>
</comment>
<comment type="tissue specificity">
    <text evidence="6">Liver, kidney, lung, hypothalamus, anterior pituitary and placenta.</text>
</comment>
<comment type="developmental stage">
    <text evidence="6">Expression in the liver during fetal development increases between day 125 and term, and rises further in the newborn, being highest in the adult liver.</text>
</comment>
<comment type="similarity">
    <text evidence="8">Belongs to the short-chain dehydrogenases/reductases (SDR) family.</text>
</comment>
<dbReference type="EC" id="1.1.1.146"/>
<dbReference type="EC" id="1.1.1.201" evidence="2"/>
<dbReference type="EMBL" id="X69561">
    <property type="protein sequence ID" value="CAA49290.1"/>
    <property type="molecule type" value="mRNA"/>
</dbReference>
<dbReference type="PIR" id="S33117">
    <property type="entry name" value="S33117"/>
</dbReference>
<dbReference type="RefSeq" id="NP_001009395.1">
    <property type="nucleotide sequence ID" value="NM_001009395.2"/>
</dbReference>
<dbReference type="SMR" id="P51975"/>
<dbReference type="STRING" id="9940.ENSOARP00000013948"/>
<dbReference type="GlyCosmos" id="P51975">
    <property type="glycosylation" value="2 sites, No reported glycans"/>
</dbReference>
<dbReference type="PaxDb" id="9940-ENSOARP00000013948"/>
<dbReference type="GeneID" id="443409"/>
<dbReference type="KEGG" id="oas:443409"/>
<dbReference type="CTD" id="3290"/>
<dbReference type="eggNOG" id="KOG1205">
    <property type="taxonomic scope" value="Eukaryota"/>
</dbReference>
<dbReference type="OrthoDB" id="1933717at2759"/>
<dbReference type="BRENDA" id="1.1.1.146">
    <property type="organism ID" value="2668"/>
</dbReference>
<dbReference type="Proteomes" id="UP000002356">
    <property type="component" value="Unplaced"/>
</dbReference>
<dbReference type="GO" id="GO:0005789">
    <property type="term" value="C:endoplasmic reticulum membrane"/>
    <property type="evidence" value="ECO:0007669"/>
    <property type="project" value="UniProtKB-SubCell"/>
</dbReference>
<dbReference type="GO" id="GO:0047022">
    <property type="term" value="F:7-beta-hydroxysteroid dehydrogenase (NADP+) activity"/>
    <property type="evidence" value="ECO:0007669"/>
    <property type="project" value="RHEA"/>
</dbReference>
<dbReference type="GO" id="GO:0102196">
    <property type="term" value="F:cortisol dehydrogenase (NAD+) activity"/>
    <property type="evidence" value="ECO:0007669"/>
    <property type="project" value="RHEA"/>
</dbReference>
<dbReference type="GO" id="GO:0005496">
    <property type="term" value="F:steroid binding"/>
    <property type="evidence" value="ECO:0007669"/>
    <property type="project" value="TreeGrafter"/>
</dbReference>
<dbReference type="GO" id="GO:0006706">
    <property type="term" value="P:steroid catabolic process"/>
    <property type="evidence" value="ECO:0007669"/>
    <property type="project" value="TreeGrafter"/>
</dbReference>
<dbReference type="FunFam" id="3.40.50.720:FF:000329">
    <property type="entry name" value="Corticosteroid 11-beta-dehydrogenase isozyme 1"/>
    <property type="match status" value="1"/>
</dbReference>
<dbReference type="Gene3D" id="3.40.50.720">
    <property type="entry name" value="NAD(P)-binding Rossmann-like Domain"/>
    <property type="match status" value="1"/>
</dbReference>
<dbReference type="InterPro" id="IPR051253">
    <property type="entry name" value="11-beta-HSD"/>
</dbReference>
<dbReference type="InterPro" id="IPR036291">
    <property type="entry name" value="NAD(P)-bd_dom_sf"/>
</dbReference>
<dbReference type="InterPro" id="IPR020904">
    <property type="entry name" value="Sc_DH/Rdtase_CS"/>
</dbReference>
<dbReference type="InterPro" id="IPR002347">
    <property type="entry name" value="SDR_fam"/>
</dbReference>
<dbReference type="PANTHER" id="PTHR44279:SF1">
    <property type="entry name" value="11-BETA-HYDROXYSTEROID DEHYDROGENASE 1"/>
    <property type="match status" value="1"/>
</dbReference>
<dbReference type="PANTHER" id="PTHR44279">
    <property type="entry name" value="HYDROXYSTEROID (11-BETA) DEHYDROGENASE 1-LIKE B-RELATED"/>
    <property type="match status" value="1"/>
</dbReference>
<dbReference type="Pfam" id="PF00106">
    <property type="entry name" value="adh_short"/>
    <property type="match status" value="1"/>
</dbReference>
<dbReference type="PRINTS" id="PR00081">
    <property type="entry name" value="GDHRDH"/>
</dbReference>
<dbReference type="SUPFAM" id="SSF51735">
    <property type="entry name" value="NAD(P)-binding Rossmann-fold domains"/>
    <property type="match status" value="1"/>
</dbReference>
<dbReference type="PROSITE" id="PS00061">
    <property type="entry name" value="ADH_SHORT"/>
    <property type="match status" value="1"/>
</dbReference>
<feature type="chain" id="PRO_0000054625" description="11-beta-hydroxysteroid dehydrogenase 1">
    <location>
        <begin position="1"/>
        <end position="292"/>
    </location>
</feature>
<feature type="topological domain" description="Cytoplasmic" evidence="4">
    <location>
        <begin position="1"/>
        <end position="7"/>
    </location>
</feature>
<feature type="transmembrane region" description="Helical; Signal-anchor for type II membrane protein" evidence="4">
    <location>
        <begin position="8"/>
        <end position="24"/>
    </location>
</feature>
<feature type="topological domain" description="Lumenal" evidence="4">
    <location>
        <begin position="25"/>
        <end position="292"/>
    </location>
</feature>
<feature type="active site" description="Proton acceptor" evidence="5">
    <location>
        <position position="183"/>
    </location>
</feature>
<feature type="binding site" evidence="2">
    <location>
        <begin position="41"/>
        <end position="67"/>
    </location>
    <ligand>
        <name>NADP(+)</name>
        <dbReference type="ChEBI" id="CHEBI:58349"/>
    </ligand>
</feature>
<feature type="binding site" evidence="2">
    <location>
        <begin position="92"/>
        <end position="93"/>
    </location>
    <ligand>
        <name>NADP(+)</name>
        <dbReference type="ChEBI" id="CHEBI:58349"/>
    </ligand>
</feature>
<feature type="binding site" evidence="2">
    <location>
        <begin position="119"/>
        <end position="121"/>
    </location>
    <ligand>
        <name>NADP(+)</name>
        <dbReference type="ChEBI" id="CHEBI:58349"/>
    </ligand>
</feature>
<feature type="binding site" evidence="1">
    <location>
        <position position="170"/>
    </location>
    <ligand>
        <name>substrate</name>
    </ligand>
</feature>
<feature type="binding site" evidence="2">
    <location>
        <begin position="183"/>
        <end position="187"/>
    </location>
    <ligand>
        <name>NADP(+)</name>
        <dbReference type="ChEBI" id="CHEBI:58349"/>
    </ligand>
</feature>
<feature type="binding site" evidence="1">
    <location>
        <begin position="216"/>
        <end position="222"/>
    </location>
    <ligand>
        <name>NADP(+)</name>
        <dbReference type="ChEBI" id="CHEBI:58349"/>
    </ligand>
</feature>
<feature type="binding site" evidence="2">
    <location>
        <begin position="218"/>
        <end position="222"/>
    </location>
    <ligand>
        <name>NADP(+)</name>
        <dbReference type="ChEBI" id="CHEBI:58349"/>
    </ligand>
</feature>
<feature type="glycosylation site" description="N-linked (GlcNAc...) asparagine" evidence="4">
    <location>
        <position position="95"/>
    </location>
</feature>
<feature type="glycosylation site" description="N-linked (GlcNAc...) asparagine" evidence="4">
    <location>
        <position position="207"/>
    </location>
</feature>
<sequence>MAFMKKYLLPILGIFLAYYYYSANEEFRPEMLRGKRVIVTGASKGIGREMAYHLARMGAHVVVTARSEESLKKVVSRCLELGAASAHYVAGTMENMTFAEQFVAKAGELVGGLDMLILNHINYTPLRVFSNDIHLLRRSLEVNLLSYVVLSTAALPMLKQTSGSIVVVSSVAGKIACPLAAAYSASKFALDGFFSSLRTEYEATKVNVSITLCILGLIDTDTAMKAVAGIYNAEASPKEECALEIIKGGALRQDEVYYDNSILTSLLLKNPGRKIMEFLSLKKYNMERFINN</sequence>
<proteinExistence type="evidence at transcript level"/>
<keyword id="KW-0256">Endoplasmic reticulum</keyword>
<keyword id="KW-0325">Glycoprotein</keyword>
<keyword id="KW-0443">Lipid metabolism</keyword>
<keyword id="KW-0472">Membrane</keyword>
<keyword id="KW-0521">NADP</keyword>
<keyword id="KW-0560">Oxidoreductase</keyword>
<keyword id="KW-1185">Reference proteome</keyword>
<keyword id="KW-0735">Signal-anchor</keyword>
<keyword id="KW-0753">Steroid metabolism</keyword>
<keyword id="KW-0812">Transmembrane</keyword>
<keyword id="KW-1133">Transmembrane helix</keyword>
<name>DHI1_SHEEP</name>
<accession>P51975</accession>